<comment type="function">
    <text evidence="1">Involved in the biosynthesis of a nickel-pincer cofactor ((SCS)Ni(II) pincer complex). Binds Ni(2+), and functions in nickel delivery to pyridinium-3,5-bisthiocarboxylic acid mononucleotide (P2TMN), to form the mature cofactor. Is thus probably required for the activation of nickel-pincer cofactor-dependent enzymes.</text>
</comment>
<comment type="catalytic activity">
    <reaction evidence="1">
        <text>Ni(II)-pyridinium-3,5-bisthiocarboxylate mononucleotide = pyridinium-3,5-bisthiocarboxylate mononucleotide + Ni(2+)</text>
        <dbReference type="Rhea" id="RHEA:54784"/>
        <dbReference type="ChEBI" id="CHEBI:49786"/>
        <dbReference type="ChEBI" id="CHEBI:137372"/>
        <dbReference type="ChEBI" id="CHEBI:137373"/>
        <dbReference type="EC" id="4.99.1.12"/>
    </reaction>
</comment>
<comment type="similarity">
    <text evidence="1">Belongs to the LarC family.</text>
</comment>
<reference key="1">
    <citation type="submission" date="2006-12" db="EMBL/GenBank/DDBJ databases">
        <title>Complete sequence of chromosome 1 of Nocardioides sp. JS614.</title>
        <authorList>
            <person name="Copeland A."/>
            <person name="Lucas S."/>
            <person name="Lapidus A."/>
            <person name="Barry K."/>
            <person name="Detter J.C."/>
            <person name="Glavina del Rio T."/>
            <person name="Hammon N."/>
            <person name="Israni S."/>
            <person name="Dalin E."/>
            <person name="Tice H."/>
            <person name="Pitluck S."/>
            <person name="Thompson L.S."/>
            <person name="Brettin T."/>
            <person name="Bruce D."/>
            <person name="Han C."/>
            <person name="Tapia R."/>
            <person name="Schmutz J."/>
            <person name="Larimer F."/>
            <person name="Land M."/>
            <person name="Hauser L."/>
            <person name="Kyrpides N."/>
            <person name="Kim E."/>
            <person name="Mattes T."/>
            <person name="Gossett J."/>
            <person name="Richardson P."/>
        </authorList>
    </citation>
    <scope>NUCLEOTIDE SEQUENCE [LARGE SCALE GENOMIC DNA]</scope>
    <source>
        <strain>ATCC BAA-499 / JS614</strain>
    </source>
</reference>
<sequence length="393" mass="40240">MTTAWVDASAGASGDMLLGALVGAGVPVAVLQAAVDAVAPEPVTLRVEHVRRGGLAATRCHVEVTDTARHRTWRDVRTLLAAADLADDVRGLALRVFERLATAEATVHGTSPDDVHFHEVGALDAIADVTGVVAGFVHLGATAVTVSPVAVGSGSVSTAHGLLPVPPPAVAELLRGVPSYAGAATMETCTPTGAALLTTLATAYGPQPAMSVDTIGVGAGGRDPEGHPNVLRLFVGVPADAGGGPLLLECNVDDLDPRVWPAVIAALLEAGASDAWLTPILMKKGRPAHTLSALVDAGRAAGVRAAIFRQTSTIGLREQPLTKHALEREIVAVDVDGQRIAVKLARHDGAVVNAQPEYDDVARAAADLDRPVADVLAEAVARGRAFLTPGDKI</sequence>
<name>LARC_NOCSJ</name>
<organism>
    <name type="scientific">Nocardioides sp. (strain ATCC BAA-499 / JS614)</name>
    <dbReference type="NCBI Taxonomy" id="196162"/>
    <lineage>
        <taxon>Bacteria</taxon>
        <taxon>Bacillati</taxon>
        <taxon>Actinomycetota</taxon>
        <taxon>Actinomycetes</taxon>
        <taxon>Propionibacteriales</taxon>
        <taxon>Nocardioidaceae</taxon>
        <taxon>Nocardioides</taxon>
    </lineage>
</organism>
<keyword id="KW-0456">Lyase</keyword>
<keyword id="KW-0533">Nickel</keyword>
<keyword id="KW-1185">Reference proteome</keyword>
<gene>
    <name evidence="1" type="primary">larC</name>
    <name type="ordered locus">Noca_0168</name>
</gene>
<proteinExistence type="inferred from homology"/>
<evidence type="ECO:0000255" key="1">
    <source>
        <dbReference type="HAMAP-Rule" id="MF_01074"/>
    </source>
</evidence>
<dbReference type="EC" id="4.99.1.12" evidence="1"/>
<dbReference type="EMBL" id="CP000509">
    <property type="protein sequence ID" value="ABL79713.1"/>
    <property type="molecule type" value="Genomic_DNA"/>
</dbReference>
<dbReference type="RefSeq" id="WP_011753664.1">
    <property type="nucleotide sequence ID" value="NC_008699.1"/>
</dbReference>
<dbReference type="SMR" id="A1SD28"/>
<dbReference type="STRING" id="196162.Noca_0168"/>
<dbReference type="KEGG" id="nca:Noca_0168"/>
<dbReference type="eggNOG" id="COG1641">
    <property type="taxonomic scope" value="Bacteria"/>
</dbReference>
<dbReference type="HOGENOM" id="CLU_028523_2_1_11"/>
<dbReference type="OrthoDB" id="9765625at2"/>
<dbReference type="Proteomes" id="UP000000640">
    <property type="component" value="Chromosome"/>
</dbReference>
<dbReference type="GO" id="GO:0016829">
    <property type="term" value="F:lyase activity"/>
    <property type="evidence" value="ECO:0007669"/>
    <property type="project" value="UniProtKB-UniRule"/>
</dbReference>
<dbReference type="GO" id="GO:0016151">
    <property type="term" value="F:nickel cation binding"/>
    <property type="evidence" value="ECO:0007669"/>
    <property type="project" value="UniProtKB-UniRule"/>
</dbReference>
<dbReference type="GO" id="GO:0051604">
    <property type="term" value="P:protein maturation"/>
    <property type="evidence" value="ECO:0007669"/>
    <property type="project" value="UniProtKB-UniRule"/>
</dbReference>
<dbReference type="Gene3D" id="3.10.20.300">
    <property type="entry name" value="mk0293 like domain"/>
    <property type="match status" value="1"/>
</dbReference>
<dbReference type="Gene3D" id="3.30.70.1380">
    <property type="entry name" value="Transcriptional regulatory protein pf0864 domain like"/>
    <property type="match status" value="1"/>
</dbReference>
<dbReference type="HAMAP" id="MF_01074">
    <property type="entry name" value="LarC"/>
    <property type="match status" value="1"/>
</dbReference>
<dbReference type="InterPro" id="IPR002822">
    <property type="entry name" value="Ni_insertion"/>
</dbReference>
<dbReference type="NCBIfam" id="TIGR00299">
    <property type="entry name" value="nickel pincer cofactor biosynthesis protein LarC"/>
    <property type="match status" value="1"/>
</dbReference>
<dbReference type="PANTHER" id="PTHR36566">
    <property type="entry name" value="NICKEL INSERTION PROTEIN-RELATED"/>
    <property type="match status" value="1"/>
</dbReference>
<dbReference type="PANTHER" id="PTHR36566:SF1">
    <property type="entry name" value="PYRIDINIUM-3,5-BISTHIOCARBOXYLIC ACID MONONUCLEOTIDE NICKEL INSERTION PROTEIN"/>
    <property type="match status" value="1"/>
</dbReference>
<dbReference type="Pfam" id="PF01969">
    <property type="entry name" value="Ni_insertion"/>
    <property type="match status" value="1"/>
</dbReference>
<protein>
    <recommendedName>
        <fullName evidence="1">Pyridinium-3,5-bisthiocarboxylic acid mononucleotide nickel insertion protein</fullName>
        <shortName evidence="1">P2TMN nickel insertion protein</shortName>
        <ecNumber evidence="1">4.99.1.12</ecNumber>
    </recommendedName>
    <alternativeName>
        <fullName evidence="1">Nickel-pincer cofactor biosynthesis protein LarC</fullName>
    </alternativeName>
</protein>
<accession>A1SD28</accession>
<feature type="chain" id="PRO_1000064655" description="Pyridinium-3,5-bisthiocarboxylic acid mononucleotide nickel insertion protein">
    <location>
        <begin position="1"/>
        <end position="393"/>
    </location>
</feature>